<organism>
    <name type="scientific">Escherichia coli (strain K12)</name>
    <dbReference type="NCBI Taxonomy" id="83333"/>
    <lineage>
        <taxon>Bacteria</taxon>
        <taxon>Pseudomonadati</taxon>
        <taxon>Pseudomonadota</taxon>
        <taxon>Gammaproteobacteria</taxon>
        <taxon>Enterobacterales</taxon>
        <taxon>Enterobacteriaceae</taxon>
        <taxon>Escherichia</taxon>
    </lineage>
</organism>
<gene>
    <name type="primary">uvrY</name>
    <name type="synonym">yecB</name>
    <name type="ordered locus">b1914</name>
    <name type="ordered locus">JW1899</name>
</gene>
<accession>P0AED5</accession>
<accession>P07027</accession>
<proteinExistence type="evidence at protein level"/>
<feature type="chain" id="PRO_0000081292" description="Response regulator UvrY">
    <location>
        <begin position="1"/>
        <end position="218"/>
    </location>
</feature>
<feature type="domain" description="Response regulatory" evidence="1">
    <location>
        <begin position="3"/>
        <end position="119"/>
    </location>
</feature>
<feature type="domain" description="HTH luxR-type" evidence="2">
    <location>
        <begin position="143"/>
        <end position="208"/>
    </location>
</feature>
<feature type="DNA-binding region" description="H-T-H motif" evidence="2">
    <location>
        <begin position="167"/>
        <end position="186"/>
    </location>
</feature>
<feature type="modified residue" description="4-aspartylphosphate" evidence="1">
    <location>
        <position position="54"/>
    </location>
</feature>
<feature type="sequence conflict" description="In Ref. 5; CAA27328." evidence="6" ref="5">
    <original>DD</original>
    <variation>MT</variation>
    <location>
        <begin position="8"/>
        <end position="9"/>
    </location>
</feature>
<dbReference type="EMBL" id="M24615">
    <property type="protein sequence ID" value="AAA24755.1"/>
    <property type="molecule type" value="Genomic_DNA"/>
</dbReference>
<dbReference type="EMBL" id="U00096">
    <property type="protein sequence ID" value="AAC74981.1"/>
    <property type="molecule type" value="Genomic_DNA"/>
</dbReference>
<dbReference type="EMBL" id="AP009048">
    <property type="protein sequence ID" value="BAA15734.1"/>
    <property type="molecule type" value="Genomic_DNA"/>
</dbReference>
<dbReference type="EMBL" id="X05398">
    <property type="protein sequence ID" value="CAA28982.1"/>
    <property type="molecule type" value="Genomic_DNA"/>
</dbReference>
<dbReference type="EMBL" id="X03691">
    <property type="protein sequence ID" value="CAA27328.1"/>
    <property type="molecule type" value="Genomic_DNA"/>
</dbReference>
<dbReference type="PIR" id="A26750">
    <property type="entry name" value="QQEC24"/>
</dbReference>
<dbReference type="RefSeq" id="NP_416424.1">
    <property type="nucleotide sequence ID" value="NC_000913.3"/>
</dbReference>
<dbReference type="RefSeq" id="WP_000611335.1">
    <property type="nucleotide sequence ID" value="NZ_STEB01000026.1"/>
</dbReference>
<dbReference type="SMR" id="P0AED5"/>
<dbReference type="BioGRID" id="4261107">
    <property type="interactions" value="201"/>
</dbReference>
<dbReference type="DIP" id="DIP-35922N"/>
<dbReference type="FunCoup" id="P0AED5">
    <property type="interactions" value="354"/>
</dbReference>
<dbReference type="IntAct" id="P0AED5">
    <property type="interactions" value="37"/>
</dbReference>
<dbReference type="STRING" id="511145.b1914"/>
<dbReference type="jPOST" id="P0AED5"/>
<dbReference type="PaxDb" id="511145-b1914"/>
<dbReference type="EnsemblBacteria" id="AAC74981">
    <property type="protein sequence ID" value="AAC74981"/>
    <property type="gene ID" value="b1914"/>
</dbReference>
<dbReference type="GeneID" id="93776219"/>
<dbReference type="GeneID" id="946424"/>
<dbReference type="KEGG" id="ecj:JW1899"/>
<dbReference type="KEGG" id="eco:b1914"/>
<dbReference type="KEGG" id="ecoc:C3026_10860"/>
<dbReference type="PATRIC" id="fig|1411691.4.peg.336"/>
<dbReference type="EchoBASE" id="EB1130"/>
<dbReference type="eggNOG" id="COG2197">
    <property type="taxonomic scope" value="Bacteria"/>
</dbReference>
<dbReference type="HOGENOM" id="CLU_000445_90_1_6"/>
<dbReference type="InParanoid" id="P0AED5"/>
<dbReference type="OMA" id="NVLRKTQ"/>
<dbReference type="OrthoDB" id="9796655at2"/>
<dbReference type="PhylomeDB" id="P0AED5"/>
<dbReference type="BioCyc" id="EcoCyc:EG11140-MONOMER"/>
<dbReference type="PRO" id="PR:P0AED5"/>
<dbReference type="Proteomes" id="UP000000625">
    <property type="component" value="Chromosome"/>
</dbReference>
<dbReference type="GO" id="GO:0005737">
    <property type="term" value="C:cytoplasm"/>
    <property type="evidence" value="ECO:0007669"/>
    <property type="project" value="UniProtKB-SubCell"/>
</dbReference>
<dbReference type="GO" id="GO:0003677">
    <property type="term" value="F:DNA binding"/>
    <property type="evidence" value="ECO:0007669"/>
    <property type="project" value="UniProtKB-KW"/>
</dbReference>
<dbReference type="GO" id="GO:0000156">
    <property type="term" value="F:phosphorelay response regulator activity"/>
    <property type="evidence" value="ECO:0000314"/>
    <property type="project" value="EcoCyc"/>
</dbReference>
<dbReference type="GO" id="GO:0000160">
    <property type="term" value="P:phosphorelay signal transduction system"/>
    <property type="evidence" value="ECO:0000314"/>
    <property type="project" value="EcoCyc"/>
</dbReference>
<dbReference type="GO" id="GO:0006355">
    <property type="term" value="P:regulation of DNA-templated transcription"/>
    <property type="evidence" value="ECO:0007669"/>
    <property type="project" value="InterPro"/>
</dbReference>
<dbReference type="CDD" id="cd06170">
    <property type="entry name" value="LuxR_C_like"/>
    <property type="match status" value="1"/>
</dbReference>
<dbReference type="CDD" id="cd17535">
    <property type="entry name" value="REC_NarL-like"/>
    <property type="match status" value="1"/>
</dbReference>
<dbReference type="FunFam" id="3.40.50.2300:FF:000015">
    <property type="entry name" value="Two-component response regulator UvrY"/>
    <property type="match status" value="1"/>
</dbReference>
<dbReference type="Gene3D" id="3.40.50.2300">
    <property type="match status" value="1"/>
</dbReference>
<dbReference type="InterPro" id="IPR011006">
    <property type="entry name" value="CheY-like_superfamily"/>
</dbReference>
<dbReference type="InterPro" id="IPR016032">
    <property type="entry name" value="Sig_transdc_resp-reg_C-effctor"/>
</dbReference>
<dbReference type="InterPro" id="IPR001789">
    <property type="entry name" value="Sig_transdc_resp-reg_receiver"/>
</dbReference>
<dbReference type="InterPro" id="IPR000792">
    <property type="entry name" value="Tscrpt_reg_LuxR_C"/>
</dbReference>
<dbReference type="InterPro" id="IPR039420">
    <property type="entry name" value="WalR-like"/>
</dbReference>
<dbReference type="NCBIfam" id="NF007018">
    <property type="entry name" value="PRK09483.1"/>
    <property type="match status" value="1"/>
</dbReference>
<dbReference type="PANTHER" id="PTHR43214:SF3">
    <property type="entry name" value="RESPONSE REGULATOR UVRY"/>
    <property type="match status" value="1"/>
</dbReference>
<dbReference type="PANTHER" id="PTHR43214">
    <property type="entry name" value="TWO-COMPONENT RESPONSE REGULATOR"/>
    <property type="match status" value="1"/>
</dbReference>
<dbReference type="Pfam" id="PF00196">
    <property type="entry name" value="GerE"/>
    <property type="match status" value="1"/>
</dbReference>
<dbReference type="Pfam" id="PF00072">
    <property type="entry name" value="Response_reg"/>
    <property type="match status" value="1"/>
</dbReference>
<dbReference type="PRINTS" id="PR00038">
    <property type="entry name" value="HTHLUXR"/>
</dbReference>
<dbReference type="SMART" id="SM00421">
    <property type="entry name" value="HTH_LUXR"/>
    <property type="match status" value="1"/>
</dbReference>
<dbReference type="SMART" id="SM00448">
    <property type="entry name" value="REC"/>
    <property type="match status" value="1"/>
</dbReference>
<dbReference type="SUPFAM" id="SSF46894">
    <property type="entry name" value="C-terminal effector domain of the bipartite response regulators"/>
    <property type="match status" value="1"/>
</dbReference>
<dbReference type="SUPFAM" id="SSF52172">
    <property type="entry name" value="CheY-like"/>
    <property type="match status" value="1"/>
</dbReference>
<dbReference type="PROSITE" id="PS00622">
    <property type="entry name" value="HTH_LUXR_1"/>
    <property type="match status" value="1"/>
</dbReference>
<dbReference type="PROSITE" id="PS50043">
    <property type="entry name" value="HTH_LUXR_2"/>
    <property type="match status" value="1"/>
</dbReference>
<dbReference type="PROSITE" id="PS50110">
    <property type="entry name" value="RESPONSE_REGULATORY"/>
    <property type="match status" value="1"/>
</dbReference>
<protein>
    <recommendedName>
        <fullName>Response regulator UvrY</fullName>
    </recommendedName>
</protein>
<reference key="1">
    <citation type="journal article" date="1987" name="Nucleic Acids Res.">
        <title>Regulation of the Escherichia coli excision repair gene uvrC. Overlap between the uvrC structural gene and the region coding for a 24 kD protein.</title>
        <authorList>
            <person name="Moolenaar G.F."/>
            <person name="van Sluis C.A."/>
            <person name="Backendorf C."/>
            <person name="van de Putte P."/>
        </authorList>
    </citation>
    <scope>NUCLEOTIDE SEQUENCE [GENOMIC DNA]</scope>
</reference>
<reference key="2">
    <citation type="journal article" date="1996" name="DNA Res.">
        <title>A 460-kb DNA sequence of the Escherichia coli K-12 genome corresponding to the 40.1-50.0 min region on the linkage map.</title>
        <authorList>
            <person name="Itoh T."/>
            <person name="Aiba H."/>
            <person name="Baba T."/>
            <person name="Fujita K."/>
            <person name="Hayashi K."/>
            <person name="Inada T."/>
            <person name="Isono K."/>
            <person name="Kasai H."/>
            <person name="Kimura S."/>
            <person name="Kitakawa M."/>
            <person name="Kitagawa M."/>
            <person name="Makino K."/>
            <person name="Miki T."/>
            <person name="Mizobuchi K."/>
            <person name="Mori H."/>
            <person name="Mori T."/>
            <person name="Motomura K."/>
            <person name="Nakade S."/>
            <person name="Nakamura Y."/>
            <person name="Nashimoto H."/>
            <person name="Nishio Y."/>
            <person name="Oshima T."/>
            <person name="Saito N."/>
            <person name="Sampei G."/>
            <person name="Seki Y."/>
            <person name="Sivasundaram S."/>
            <person name="Tagami H."/>
            <person name="Takeda J."/>
            <person name="Takemoto K."/>
            <person name="Wada C."/>
            <person name="Yamamoto Y."/>
            <person name="Horiuchi T."/>
        </authorList>
    </citation>
    <scope>NUCLEOTIDE SEQUENCE [LARGE SCALE GENOMIC DNA]</scope>
    <source>
        <strain>K12 / W3110 / ATCC 27325 / DSM 5911</strain>
    </source>
</reference>
<reference key="3">
    <citation type="journal article" date="1997" name="Science">
        <title>The complete genome sequence of Escherichia coli K-12.</title>
        <authorList>
            <person name="Blattner F.R."/>
            <person name="Plunkett G. III"/>
            <person name="Bloch C.A."/>
            <person name="Perna N.T."/>
            <person name="Burland V."/>
            <person name="Riley M."/>
            <person name="Collado-Vides J."/>
            <person name="Glasner J.D."/>
            <person name="Rode C.K."/>
            <person name="Mayhew G.F."/>
            <person name="Gregor J."/>
            <person name="Davis N.W."/>
            <person name="Kirkpatrick H.A."/>
            <person name="Goeden M.A."/>
            <person name="Rose D.J."/>
            <person name="Mau B."/>
            <person name="Shao Y."/>
        </authorList>
    </citation>
    <scope>NUCLEOTIDE SEQUENCE [LARGE SCALE GENOMIC DNA]</scope>
    <source>
        <strain>K12 / MG1655 / ATCC 47076</strain>
    </source>
</reference>
<reference key="4">
    <citation type="journal article" date="2006" name="Mol. Syst. Biol.">
        <title>Highly accurate genome sequences of Escherichia coli K-12 strains MG1655 and W3110.</title>
        <authorList>
            <person name="Hayashi K."/>
            <person name="Morooka N."/>
            <person name="Yamamoto Y."/>
            <person name="Fujita K."/>
            <person name="Isono K."/>
            <person name="Choi S."/>
            <person name="Ohtsubo E."/>
            <person name="Baba T."/>
            <person name="Wanner B.L."/>
            <person name="Mori H."/>
            <person name="Horiuchi T."/>
        </authorList>
    </citation>
    <scope>NUCLEOTIDE SEQUENCE [LARGE SCALE GENOMIC DNA]</scope>
    <source>
        <strain>K12 / W3110 / ATCC 27325 / DSM 5911</strain>
    </source>
</reference>
<reference key="5">
    <citation type="journal article" date="1986" name="Nucleic Acids Res.">
        <title>Multiple control elements for the uvrC gene unit of Escherichia coli.</title>
        <authorList>
            <person name="Sharma S."/>
            <person name="Stark T.F."/>
            <person name="Beattie W.G."/>
            <person name="Moses R.E."/>
        </authorList>
    </citation>
    <scope>NUCLEOTIDE SEQUENCE [GENOMIC DNA] OF 8-218</scope>
</reference>
<reference key="6">
    <citation type="journal article" date="2001" name="J. Biol. Chem.">
        <title>Identification of UvrY as the cognate response regulator for the BarA sensor kinase in Escherichia coli.</title>
        <authorList>
            <person name="Pernestig A.-K."/>
            <person name="Melefors O."/>
            <person name="Georgellis D."/>
        </authorList>
    </citation>
    <scope>PHOSPHORYLATION BY BARA</scope>
    <scope>DISRUPTION PHENOTYPE</scope>
    <source>
        <strain>K12 / MC4100 / ATCC 35695 / DSM 6574</strain>
    </source>
</reference>
<reference key="7">
    <citation type="journal article" date="2002" name="J. Bacteriol.">
        <title>Regulatory circuitry of the CsrA/CsrB and BarA/UvrY systems of Escherichia coli.</title>
        <authorList>
            <person name="Suzuki K."/>
            <person name="Wang X."/>
            <person name="Weilbacher T."/>
            <person name="Pernestig A.-K."/>
            <person name="Melefors O."/>
            <person name="Georgellis D."/>
            <person name="Babitzke P."/>
            <person name="Romeo T."/>
        </authorList>
    </citation>
    <scope>FUNCTION</scope>
    <scope>ACTIVATION BY BARA</scope>
    <scope>INDUCTION</scope>
    <source>
        <strain>K12 / MC4100 / ATCC 35695 / DSM 6574</strain>
    </source>
</reference>
<reference key="8">
    <citation type="journal article" date="2003" name="J. Bacteriol.">
        <title>The Escherichia coli BarA-UvrY two-component system is needed for efficient switching between glycolytic and gluconeogenic carbon sources.</title>
        <authorList>
            <person name="Pernestig A.-K."/>
            <person name="Georgellis D."/>
            <person name="Romeo T."/>
            <person name="Suzuki K."/>
            <person name="Tomenius H."/>
            <person name="Normark S."/>
            <person name="Melefors O."/>
        </authorList>
    </citation>
    <scope>FUNCTION</scope>
</reference>
<evidence type="ECO:0000255" key="1">
    <source>
        <dbReference type="PROSITE-ProRule" id="PRU00169"/>
    </source>
</evidence>
<evidence type="ECO:0000255" key="2">
    <source>
        <dbReference type="PROSITE-ProRule" id="PRU00411"/>
    </source>
</evidence>
<evidence type="ECO:0000269" key="3">
    <source>
    </source>
</evidence>
<evidence type="ECO:0000269" key="4">
    <source>
    </source>
</evidence>
<evidence type="ECO:0000269" key="5">
    <source>
    </source>
</evidence>
<evidence type="ECO:0000305" key="6"/>
<name>UVRY_ECOLI</name>
<keyword id="KW-0963">Cytoplasm</keyword>
<keyword id="KW-0238">DNA-binding</keyword>
<keyword id="KW-0597">Phosphoprotein</keyword>
<keyword id="KW-1185">Reference proteome</keyword>
<keyword id="KW-0804">Transcription</keyword>
<keyword id="KW-0805">Transcription regulation</keyword>
<keyword id="KW-0902">Two-component regulatory system</keyword>
<sequence>MINVLLVDDHELVRAGIRRILEDIKGIKVVGEASCGEDAVKWCRTNAVDVVLMDMSMPGIGGLEATRKIARSTADVKIIMLTVHTENPLPAKVMQAGAAGYLSKGAAPQEVVSAIRSVYSGQRYIASDIAQQMALSQIEPEKTESPFASLSERELQIMLMITKGQKVNEISEQLNLSPKTVNSYRYRMFSKLNIHGDVELTHLAIRHGLCNAETLSSQ</sequence>
<comment type="function">
    <text evidence="4 5">Member of the two-component regulatory system UvrY/BarA involved in the regulation of carbon metabolism via the CsrA/CsrB regulatory system (PubMed:12193630, PubMed:12533459). UvrY activates the transcription of the untranslated csrB RNA and of barA, in an autoregulatory loop. Mediates the effects of CsrA on csrB RNA by BarA-dependent and BarA-independent mechanisms (PubMed:12193630).</text>
</comment>
<comment type="subcellular location">
    <subcellularLocation>
        <location evidence="6">Cytoplasm</location>
    </subcellularLocation>
</comment>
<comment type="induction">
    <text evidence="4">Expression is regulated by SidA.</text>
</comment>
<comment type="PTM">
    <text evidence="3 4">Phosphorylated and activated by BarA.</text>
</comment>
<comment type="disruption phenotype">
    <text evidence="3">Inactivation of the gene leads to hydrogen peroxide hypersensitivity.</text>
</comment>